<gene>
    <name evidence="1" type="primary">ureA</name>
    <name type="ordered locus">SCO1236</name>
    <name type="ORF">2SCG1.11c</name>
</gene>
<reference key="1">
    <citation type="journal article" date="2002" name="Nature">
        <title>Complete genome sequence of the model actinomycete Streptomyces coelicolor A3(2).</title>
        <authorList>
            <person name="Bentley S.D."/>
            <person name="Chater K.F."/>
            <person name="Cerdeno-Tarraga A.-M."/>
            <person name="Challis G.L."/>
            <person name="Thomson N.R."/>
            <person name="James K.D."/>
            <person name="Harris D.E."/>
            <person name="Quail M.A."/>
            <person name="Kieser H."/>
            <person name="Harper D."/>
            <person name="Bateman A."/>
            <person name="Brown S."/>
            <person name="Chandra G."/>
            <person name="Chen C.W."/>
            <person name="Collins M."/>
            <person name="Cronin A."/>
            <person name="Fraser A."/>
            <person name="Goble A."/>
            <person name="Hidalgo J."/>
            <person name="Hornsby T."/>
            <person name="Howarth S."/>
            <person name="Huang C.-H."/>
            <person name="Kieser T."/>
            <person name="Larke L."/>
            <person name="Murphy L.D."/>
            <person name="Oliver K."/>
            <person name="O'Neil S."/>
            <person name="Rabbinowitsch E."/>
            <person name="Rajandream M.A."/>
            <person name="Rutherford K.M."/>
            <person name="Rutter S."/>
            <person name="Seeger K."/>
            <person name="Saunders D."/>
            <person name="Sharp S."/>
            <person name="Squares R."/>
            <person name="Squares S."/>
            <person name="Taylor K."/>
            <person name="Warren T."/>
            <person name="Wietzorrek A."/>
            <person name="Woodward J.R."/>
            <person name="Barrell B.G."/>
            <person name="Parkhill J."/>
            <person name="Hopwood D.A."/>
        </authorList>
    </citation>
    <scope>NUCLEOTIDE SEQUENCE [LARGE SCALE GENOMIC DNA]</scope>
    <source>
        <strain>ATCC BAA-471 / A3(2) / M145</strain>
    </source>
</reference>
<keyword id="KW-0963">Cytoplasm</keyword>
<keyword id="KW-0378">Hydrolase</keyword>
<keyword id="KW-1185">Reference proteome</keyword>
<dbReference type="EC" id="3.5.1.5" evidence="1"/>
<dbReference type="EMBL" id="AL939108">
    <property type="protein sequence ID" value="CAC01460.1"/>
    <property type="molecule type" value="Genomic_DNA"/>
</dbReference>
<dbReference type="RefSeq" id="NP_625524.1">
    <property type="nucleotide sequence ID" value="NC_003888.3"/>
</dbReference>
<dbReference type="RefSeq" id="WP_003977595.1">
    <property type="nucleotide sequence ID" value="NZ_VNID01000006.1"/>
</dbReference>
<dbReference type="SMR" id="Q9FCD1"/>
<dbReference type="FunCoup" id="Q9FCD1">
    <property type="interactions" value="19"/>
</dbReference>
<dbReference type="STRING" id="100226.gene:17758819"/>
<dbReference type="PaxDb" id="100226-SCO1236"/>
<dbReference type="KEGG" id="sco:SCO1236"/>
<dbReference type="PATRIC" id="fig|100226.15.peg.1235"/>
<dbReference type="eggNOG" id="COG0831">
    <property type="taxonomic scope" value="Bacteria"/>
</dbReference>
<dbReference type="HOGENOM" id="CLU_145825_1_0_11"/>
<dbReference type="InParanoid" id="Q9FCD1"/>
<dbReference type="OrthoDB" id="9797217at2"/>
<dbReference type="PhylomeDB" id="Q9FCD1"/>
<dbReference type="UniPathway" id="UPA00258">
    <property type="reaction ID" value="UER00370"/>
</dbReference>
<dbReference type="Proteomes" id="UP000001973">
    <property type="component" value="Chromosome"/>
</dbReference>
<dbReference type="GO" id="GO:0005737">
    <property type="term" value="C:cytoplasm"/>
    <property type="evidence" value="ECO:0007669"/>
    <property type="project" value="UniProtKB-SubCell"/>
</dbReference>
<dbReference type="GO" id="GO:0016151">
    <property type="term" value="F:nickel cation binding"/>
    <property type="evidence" value="ECO:0007669"/>
    <property type="project" value="InterPro"/>
</dbReference>
<dbReference type="GO" id="GO:0009039">
    <property type="term" value="F:urease activity"/>
    <property type="evidence" value="ECO:0007669"/>
    <property type="project" value="UniProtKB-UniRule"/>
</dbReference>
<dbReference type="GO" id="GO:0043419">
    <property type="term" value="P:urea catabolic process"/>
    <property type="evidence" value="ECO:0007669"/>
    <property type="project" value="UniProtKB-UniRule"/>
</dbReference>
<dbReference type="CDD" id="cd00390">
    <property type="entry name" value="Urease_gamma"/>
    <property type="match status" value="1"/>
</dbReference>
<dbReference type="Gene3D" id="3.30.280.10">
    <property type="entry name" value="Urease, gamma-like subunit"/>
    <property type="match status" value="1"/>
</dbReference>
<dbReference type="HAMAP" id="MF_00739">
    <property type="entry name" value="Urease_gamma"/>
    <property type="match status" value="1"/>
</dbReference>
<dbReference type="InterPro" id="IPR012010">
    <property type="entry name" value="Urease_gamma"/>
</dbReference>
<dbReference type="InterPro" id="IPR002026">
    <property type="entry name" value="Urease_gamma/gamma-beta_su"/>
</dbReference>
<dbReference type="InterPro" id="IPR036463">
    <property type="entry name" value="Urease_gamma_sf"/>
</dbReference>
<dbReference type="InterPro" id="IPR050069">
    <property type="entry name" value="Urease_subunit"/>
</dbReference>
<dbReference type="NCBIfam" id="NF009712">
    <property type="entry name" value="PRK13241.1"/>
    <property type="match status" value="1"/>
</dbReference>
<dbReference type="NCBIfam" id="TIGR00193">
    <property type="entry name" value="urease_gam"/>
    <property type="match status" value="1"/>
</dbReference>
<dbReference type="PANTHER" id="PTHR33569">
    <property type="entry name" value="UREASE"/>
    <property type="match status" value="1"/>
</dbReference>
<dbReference type="PANTHER" id="PTHR33569:SF1">
    <property type="entry name" value="UREASE"/>
    <property type="match status" value="1"/>
</dbReference>
<dbReference type="Pfam" id="PF00547">
    <property type="entry name" value="Urease_gamma"/>
    <property type="match status" value="1"/>
</dbReference>
<dbReference type="PIRSF" id="PIRSF001223">
    <property type="entry name" value="Urease_gamma"/>
    <property type="match status" value="1"/>
</dbReference>
<dbReference type="SUPFAM" id="SSF54111">
    <property type="entry name" value="Urease, gamma-subunit"/>
    <property type="match status" value="1"/>
</dbReference>
<accession>Q9FCD1</accession>
<proteinExistence type="inferred from homology"/>
<evidence type="ECO:0000255" key="1">
    <source>
        <dbReference type="HAMAP-Rule" id="MF_00739"/>
    </source>
</evidence>
<protein>
    <recommendedName>
        <fullName evidence="1">Urease subunit gamma</fullName>
        <ecNumber evidence="1">3.5.1.5</ecNumber>
    </recommendedName>
    <alternativeName>
        <fullName evidence="1">Urea amidohydrolase subunit gamma</fullName>
    </alternativeName>
</protein>
<name>URE3_STRCO</name>
<organism>
    <name type="scientific">Streptomyces coelicolor (strain ATCC BAA-471 / A3(2) / M145)</name>
    <dbReference type="NCBI Taxonomy" id="100226"/>
    <lineage>
        <taxon>Bacteria</taxon>
        <taxon>Bacillati</taxon>
        <taxon>Actinomycetota</taxon>
        <taxon>Actinomycetes</taxon>
        <taxon>Kitasatosporales</taxon>
        <taxon>Streptomycetaceae</taxon>
        <taxon>Streptomyces</taxon>
        <taxon>Streptomyces albidoflavus group</taxon>
    </lineage>
</organism>
<comment type="catalytic activity">
    <reaction evidence="1">
        <text>urea + 2 H2O + H(+) = hydrogencarbonate + 2 NH4(+)</text>
        <dbReference type="Rhea" id="RHEA:20557"/>
        <dbReference type="ChEBI" id="CHEBI:15377"/>
        <dbReference type="ChEBI" id="CHEBI:15378"/>
        <dbReference type="ChEBI" id="CHEBI:16199"/>
        <dbReference type="ChEBI" id="CHEBI:17544"/>
        <dbReference type="ChEBI" id="CHEBI:28938"/>
        <dbReference type="EC" id="3.5.1.5"/>
    </reaction>
</comment>
<comment type="pathway">
    <text evidence="1">Nitrogen metabolism; urea degradation; CO(2) and NH(3) from urea (urease route): step 1/1.</text>
</comment>
<comment type="subunit">
    <text evidence="1">Heterotrimer of UreA (gamma), UreB (beta) and UreC (alpha) subunits. Three heterotrimers associate to form the active enzyme.</text>
</comment>
<comment type="subcellular location">
    <subcellularLocation>
        <location evidence="1">Cytoplasm</location>
    </subcellularLocation>
</comment>
<comment type="similarity">
    <text evidence="1">Belongs to the urease gamma subunit family.</text>
</comment>
<feature type="chain" id="PRO_0000098049" description="Urease subunit gamma">
    <location>
        <begin position="1"/>
        <end position="100"/>
    </location>
</feature>
<sequence length="100" mass="11132">MQLTPHEQERLLIHVAADVAEKRRARGVKLNHPEVVALITAHILEGARDGRSVGELMSSGRKLIQRDEVMEGIPEMIHDVQVEATFPDGTKLVTVHEPII</sequence>